<evidence type="ECO:0000255" key="1">
    <source>
        <dbReference type="HAMAP-Rule" id="MF_01631"/>
    </source>
</evidence>
<feature type="chain" id="PRO_1000215770" description="Bifunctional protein GlmU">
    <location>
        <begin position="1"/>
        <end position="457"/>
    </location>
</feature>
<feature type="region of interest" description="Pyrophosphorylase" evidence="1">
    <location>
        <begin position="1"/>
        <end position="229"/>
    </location>
</feature>
<feature type="region of interest" description="Linker" evidence="1">
    <location>
        <begin position="230"/>
        <end position="250"/>
    </location>
</feature>
<feature type="region of interest" description="N-acetyltransferase" evidence="1">
    <location>
        <begin position="251"/>
        <end position="457"/>
    </location>
</feature>
<feature type="active site" description="Proton acceptor" evidence="1">
    <location>
        <position position="362"/>
    </location>
</feature>
<feature type="binding site" evidence="1">
    <location>
        <begin position="8"/>
        <end position="11"/>
    </location>
    <ligand>
        <name>UDP-N-acetyl-alpha-D-glucosamine</name>
        <dbReference type="ChEBI" id="CHEBI:57705"/>
    </ligand>
</feature>
<feature type="binding site" evidence="1">
    <location>
        <position position="22"/>
    </location>
    <ligand>
        <name>UDP-N-acetyl-alpha-D-glucosamine</name>
        <dbReference type="ChEBI" id="CHEBI:57705"/>
    </ligand>
</feature>
<feature type="binding site" evidence="1">
    <location>
        <position position="73"/>
    </location>
    <ligand>
        <name>UDP-N-acetyl-alpha-D-glucosamine</name>
        <dbReference type="ChEBI" id="CHEBI:57705"/>
    </ligand>
</feature>
<feature type="binding site" evidence="1">
    <location>
        <begin position="78"/>
        <end position="79"/>
    </location>
    <ligand>
        <name>UDP-N-acetyl-alpha-D-glucosamine</name>
        <dbReference type="ChEBI" id="CHEBI:57705"/>
    </ligand>
</feature>
<feature type="binding site" evidence="1">
    <location>
        <position position="103"/>
    </location>
    <ligand>
        <name>Mg(2+)</name>
        <dbReference type="ChEBI" id="CHEBI:18420"/>
    </ligand>
</feature>
<feature type="binding site" evidence="1">
    <location>
        <position position="140"/>
    </location>
    <ligand>
        <name>UDP-N-acetyl-alpha-D-glucosamine</name>
        <dbReference type="ChEBI" id="CHEBI:57705"/>
    </ligand>
</feature>
<feature type="binding site" evidence="1">
    <location>
        <position position="155"/>
    </location>
    <ligand>
        <name>UDP-N-acetyl-alpha-D-glucosamine</name>
        <dbReference type="ChEBI" id="CHEBI:57705"/>
    </ligand>
</feature>
<feature type="binding site" evidence="1">
    <location>
        <position position="170"/>
    </location>
    <ligand>
        <name>UDP-N-acetyl-alpha-D-glucosamine</name>
        <dbReference type="ChEBI" id="CHEBI:57705"/>
    </ligand>
</feature>
<feature type="binding site" evidence="1">
    <location>
        <position position="227"/>
    </location>
    <ligand>
        <name>Mg(2+)</name>
        <dbReference type="ChEBI" id="CHEBI:18420"/>
    </ligand>
</feature>
<feature type="binding site" evidence="1">
    <location>
        <position position="227"/>
    </location>
    <ligand>
        <name>UDP-N-acetyl-alpha-D-glucosamine</name>
        <dbReference type="ChEBI" id="CHEBI:57705"/>
    </ligand>
</feature>
<feature type="binding site" evidence="1">
    <location>
        <position position="332"/>
    </location>
    <ligand>
        <name>UDP-N-acetyl-alpha-D-glucosamine</name>
        <dbReference type="ChEBI" id="CHEBI:57705"/>
    </ligand>
</feature>
<feature type="binding site" evidence="1">
    <location>
        <position position="350"/>
    </location>
    <ligand>
        <name>UDP-N-acetyl-alpha-D-glucosamine</name>
        <dbReference type="ChEBI" id="CHEBI:57705"/>
    </ligand>
</feature>
<feature type="binding site" evidence="1">
    <location>
        <position position="365"/>
    </location>
    <ligand>
        <name>UDP-N-acetyl-alpha-D-glucosamine</name>
        <dbReference type="ChEBI" id="CHEBI:57705"/>
    </ligand>
</feature>
<feature type="binding site" evidence="1">
    <location>
        <position position="376"/>
    </location>
    <ligand>
        <name>UDP-N-acetyl-alpha-D-glucosamine</name>
        <dbReference type="ChEBI" id="CHEBI:57705"/>
    </ligand>
</feature>
<feature type="binding site" evidence="1">
    <location>
        <begin position="385"/>
        <end position="386"/>
    </location>
    <ligand>
        <name>acetyl-CoA</name>
        <dbReference type="ChEBI" id="CHEBI:57288"/>
    </ligand>
</feature>
<feature type="binding site" evidence="1">
    <location>
        <position position="422"/>
    </location>
    <ligand>
        <name>acetyl-CoA</name>
        <dbReference type="ChEBI" id="CHEBI:57288"/>
    </ligand>
</feature>
<feature type="binding site" evidence="1">
    <location>
        <position position="439"/>
    </location>
    <ligand>
        <name>acetyl-CoA</name>
        <dbReference type="ChEBI" id="CHEBI:57288"/>
    </ligand>
</feature>
<organism>
    <name type="scientific">Clostridium botulinum (strain 657 / Type Ba4)</name>
    <dbReference type="NCBI Taxonomy" id="515621"/>
    <lineage>
        <taxon>Bacteria</taxon>
        <taxon>Bacillati</taxon>
        <taxon>Bacillota</taxon>
        <taxon>Clostridia</taxon>
        <taxon>Eubacteriales</taxon>
        <taxon>Clostridiaceae</taxon>
        <taxon>Clostridium</taxon>
    </lineage>
</organism>
<gene>
    <name evidence="1" type="primary">glmU</name>
    <name type="ordered locus">CLJ_B3875</name>
</gene>
<dbReference type="EC" id="2.7.7.23" evidence="1"/>
<dbReference type="EC" id="2.3.1.157" evidence="1"/>
<dbReference type="EMBL" id="CP001083">
    <property type="protein sequence ID" value="ACQ53502.1"/>
    <property type="molecule type" value="Genomic_DNA"/>
</dbReference>
<dbReference type="RefSeq" id="WP_003361733.1">
    <property type="nucleotide sequence ID" value="NC_012658.1"/>
</dbReference>
<dbReference type="SMR" id="C3KWA1"/>
<dbReference type="KEGG" id="cbi:CLJ_B3875"/>
<dbReference type="HOGENOM" id="CLU_029499_15_2_9"/>
<dbReference type="UniPathway" id="UPA00113">
    <property type="reaction ID" value="UER00532"/>
</dbReference>
<dbReference type="UniPathway" id="UPA00113">
    <property type="reaction ID" value="UER00533"/>
</dbReference>
<dbReference type="UniPathway" id="UPA00973"/>
<dbReference type="Proteomes" id="UP000002333">
    <property type="component" value="Chromosome"/>
</dbReference>
<dbReference type="GO" id="GO:0005737">
    <property type="term" value="C:cytoplasm"/>
    <property type="evidence" value="ECO:0007669"/>
    <property type="project" value="UniProtKB-SubCell"/>
</dbReference>
<dbReference type="GO" id="GO:0016020">
    <property type="term" value="C:membrane"/>
    <property type="evidence" value="ECO:0007669"/>
    <property type="project" value="GOC"/>
</dbReference>
<dbReference type="GO" id="GO:0019134">
    <property type="term" value="F:glucosamine-1-phosphate N-acetyltransferase activity"/>
    <property type="evidence" value="ECO:0007669"/>
    <property type="project" value="UniProtKB-UniRule"/>
</dbReference>
<dbReference type="GO" id="GO:0000287">
    <property type="term" value="F:magnesium ion binding"/>
    <property type="evidence" value="ECO:0007669"/>
    <property type="project" value="UniProtKB-UniRule"/>
</dbReference>
<dbReference type="GO" id="GO:0003977">
    <property type="term" value="F:UDP-N-acetylglucosamine diphosphorylase activity"/>
    <property type="evidence" value="ECO:0007669"/>
    <property type="project" value="UniProtKB-UniRule"/>
</dbReference>
<dbReference type="GO" id="GO:0000902">
    <property type="term" value="P:cell morphogenesis"/>
    <property type="evidence" value="ECO:0007669"/>
    <property type="project" value="UniProtKB-UniRule"/>
</dbReference>
<dbReference type="GO" id="GO:0071555">
    <property type="term" value="P:cell wall organization"/>
    <property type="evidence" value="ECO:0007669"/>
    <property type="project" value="UniProtKB-KW"/>
</dbReference>
<dbReference type="GO" id="GO:0009245">
    <property type="term" value="P:lipid A biosynthetic process"/>
    <property type="evidence" value="ECO:0007669"/>
    <property type="project" value="UniProtKB-UniRule"/>
</dbReference>
<dbReference type="GO" id="GO:0009252">
    <property type="term" value="P:peptidoglycan biosynthetic process"/>
    <property type="evidence" value="ECO:0007669"/>
    <property type="project" value="UniProtKB-UniRule"/>
</dbReference>
<dbReference type="GO" id="GO:0008360">
    <property type="term" value="P:regulation of cell shape"/>
    <property type="evidence" value="ECO:0007669"/>
    <property type="project" value="UniProtKB-KW"/>
</dbReference>
<dbReference type="GO" id="GO:0006048">
    <property type="term" value="P:UDP-N-acetylglucosamine biosynthetic process"/>
    <property type="evidence" value="ECO:0007669"/>
    <property type="project" value="UniProtKB-UniPathway"/>
</dbReference>
<dbReference type="CDD" id="cd02540">
    <property type="entry name" value="GT2_GlmU_N_bac"/>
    <property type="match status" value="1"/>
</dbReference>
<dbReference type="CDD" id="cd03353">
    <property type="entry name" value="LbH_GlmU_C"/>
    <property type="match status" value="1"/>
</dbReference>
<dbReference type="Gene3D" id="2.160.10.10">
    <property type="entry name" value="Hexapeptide repeat proteins"/>
    <property type="match status" value="1"/>
</dbReference>
<dbReference type="Gene3D" id="3.90.550.10">
    <property type="entry name" value="Spore Coat Polysaccharide Biosynthesis Protein SpsA, Chain A"/>
    <property type="match status" value="1"/>
</dbReference>
<dbReference type="HAMAP" id="MF_01631">
    <property type="entry name" value="GlmU"/>
    <property type="match status" value="1"/>
</dbReference>
<dbReference type="InterPro" id="IPR005882">
    <property type="entry name" value="Bifunctional_GlmU"/>
</dbReference>
<dbReference type="InterPro" id="IPR050065">
    <property type="entry name" value="GlmU-like"/>
</dbReference>
<dbReference type="InterPro" id="IPR038009">
    <property type="entry name" value="GlmU_C_LbH"/>
</dbReference>
<dbReference type="InterPro" id="IPR001451">
    <property type="entry name" value="Hexapep"/>
</dbReference>
<dbReference type="InterPro" id="IPR005835">
    <property type="entry name" value="NTP_transferase_dom"/>
</dbReference>
<dbReference type="InterPro" id="IPR029044">
    <property type="entry name" value="Nucleotide-diphossugar_trans"/>
</dbReference>
<dbReference type="InterPro" id="IPR011004">
    <property type="entry name" value="Trimer_LpxA-like_sf"/>
</dbReference>
<dbReference type="NCBIfam" id="TIGR01173">
    <property type="entry name" value="glmU"/>
    <property type="match status" value="1"/>
</dbReference>
<dbReference type="NCBIfam" id="NF010934">
    <property type="entry name" value="PRK14354.1"/>
    <property type="match status" value="1"/>
</dbReference>
<dbReference type="PANTHER" id="PTHR43584:SF3">
    <property type="entry name" value="BIFUNCTIONAL PROTEIN GLMU"/>
    <property type="match status" value="1"/>
</dbReference>
<dbReference type="PANTHER" id="PTHR43584">
    <property type="entry name" value="NUCLEOTIDYL TRANSFERASE"/>
    <property type="match status" value="1"/>
</dbReference>
<dbReference type="Pfam" id="PF00132">
    <property type="entry name" value="Hexapep"/>
    <property type="match status" value="3"/>
</dbReference>
<dbReference type="Pfam" id="PF00483">
    <property type="entry name" value="NTP_transferase"/>
    <property type="match status" value="1"/>
</dbReference>
<dbReference type="SUPFAM" id="SSF53448">
    <property type="entry name" value="Nucleotide-diphospho-sugar transferases"/>
    <property type="match status" value="1"/>
</dbReference>
<dbReference type="SUPFAM" id="SSF51161">
    <property type="entry name" value="Trimeric LpxA-like enzymes"/>
    <property type="match status" value="1"/>
</dbReference>
<protein>
    <recommendedName>
        <fullName evidence="1">Bifunctional protein GlmU</fullName>
    </recommendedName>
    <domain>
        <recommendedName>
            <fullName evidence="1">UDP-N-acetylglucosamine pyrophosphorylase</fullName>
            <ecNumber evidence="1">2.7.7.23</ecNumber>
        </recommendedName>
        <alternativeName>
            <fullName evidence="1">N-acetylglucosamine-1-phosphate uridyltransferase</fullName>
        </alternativeName>
    </domain>
    <domain>
        <recommendedName>
            <fullName evidence="1">Glucosamine-1-phosphate N-acetyltransferase</fullName>
            <ecNumber evidence="1">2.3.1.157</ecNumber>
        </recommendedName>
    </domain>
</protein>
<accession>C3KWA1</accession>
<name>GLMU_CLOB6</name>
<keyword id="KW-0012">Acyltransferase</keyword>
<keyword id="KW-0133">Cell shape</keyword>
<keyword id="KW-0961">Cell wall biogenesis/degradation</keyword>
<keyword id="KW-0963">Cytoplasm</keyword>
<keyword id="KW-0460">Magnesium</keyword>
<keyword id="KW-0479">Metal-binding</keyword>
<keyword id="KW-0511">Multifunctional enzyme</keyword>
<keyword id="KW-0548">Nucleotidyltransferase</keyword>
<keyword id="KW-0573">Peptidoglycan synthesis</keyword>
<keyword id="KW-0677">Repeat</keyword>
<keyword id="KW-0808">Transferase</keyword>
<reference key="1">
    <citation type="submission" date="2008-05" db="EMBL/GenBank/DDBJ databases">
        <title>Genome sequence of Clostridium botulinum Ba4 strain 657.</title>
        <authorList>
            <person name="Shrivastava S."/>
            <person name="Brown J.L."/>
            <person name="Bruce D."/>
            <person name="Detter C."/>
            <person name="Munk C."/>
            <person name="Smith L.A."/>
            <person name="Smith T.J."/>
            <person name="Sutton G."/>
            <person name="Brettin T.S."/>
        </authorList>
    </citation>
    <scope>NUCLEOTIDE SEQUENCE [LARGE SCALE GENOMIC DNA]</scope>
    <source>
        <strain>657 / Type Ba4</strain>
    </source>
</reference>
<sequence>MYNCAIILAAGKGKRMKSSMPKVVHKVCGKEMINHVIDNVRKANIKDVNLVIGKGSETVKEHTKDRNVTYSMQEEQLGTGHAVICAEEFLKDKKGTVAIFTGDAPLITNETIQELFEFHNSGKYAATLISSTVQDPTGYGRIIREASGVVKKIVEHKDCNEEELKVNEINSGMYCFDIEVLLNSLENLNNDNSQGEYYLTDVIEIIKKSGEKVGAIVVPYEEIMGVNSRVQLSEAEIVMRKRINHKHMVNGVTFIDCESTYIDVDVEIGNDTIIYPGCVIQGNTTIKEECTLYSNSRICNSVIGSGVIVENSVILESHVGEGTTVGPFAYIRPETKIGKSARIGDFVEIKKSTIGDNTKVSHLTYIGDAEVGSKCNFGCGTVVVNYDGQKKQKTIIGNNAFIGCNTNLISPVKVNDNTYIAAGSTITKEVPEGSLAIARSKQINKEGWLDKKGLLKK</sequence>
<comment type="function">
    <text evidence="1">Catalyzes the last two sequential reactions in the de novo biosynthetic pathway for UDP-N-acetylglucosamine (UDP-GlcNAc). The C-terminal domain catalyzes the transfer of acetyl group from acetyl coenzyme A to glucosamine-1-phosphate (GlcN-1-P) to produce N-acetylglucosamine-1-phosphate (GlcNAc-1-P), which is converted into UDP-GlcNAc by the transfer of uridine 5-monophosphate (from uridine 5-triphosphate), a reaction catalyzed by the N-terminal domain.</text>
</comment>
<comment type="catalytic activity">
    <reaction evidence="1">
        <text>alpha-D-glucosamine 1-phosphate + acetyl-CoA = N-acetyl-alpha-D-glucosamine 1-phosphate + CoA + H(+)</text>
        <dbReference type="Rhea" id="RHEA:13725"/>
        <dbReference type="ChEBI" id="CHEBI:15378"/>
        <dbReference type="ChEBI" id="CHEBI:57287"/>
        <dbReference type="ChEBI" id="CHEBI:57288"/>
        <dbReference type="ChEBI" id="CHEBI:57776"/>
        <dbReference type="ChEBI" id="CHEBI:58516"/>
        <dbReference type="EC" id="2.3.1.157"/>
    </reaction>
</comment>
<comment type="catalytic activity">
    <reaction evidence="1">
        <text>N-acetyl-alpha-D-glucosamine 1-phosphate + UTP + H(+) = UDP-N-acetyl-alpha-D-glucosamine + diphosphate</text>
        <dbReference type="Rhea" id="RHEA:13509"/>
        <dbReference type="ChEBI" id="CHEBI:15378"/>
        <dbReference type="ChEBI" id="CHEBI:33019"/>
        <dbReference type="ChEBI" id="CHEBI:46398"/>
        <dbReference type="ChEBI" id="CHEBI:57705"/>
        <dbReference type="ChEBI" id="CHEBI:57776"/>
        <dbReference type="EC" id="2.7.7.23"/>
    </reaction>
</comment>
<comment type="cofactor">
    <cofactor evidence="1">
        <name>Mg(2+)</name>
        <dbReference type="ChEBI" id="CHEBI:18420"/>
    </cofactor>
    <text evidence="1">Binds 1 Mg(2+) ion per subunit.</text>
</comment>
<comment type="pathway">
    <text evidence="1">Nucleotide-sugar biosynthesis; UDP-N-acetyl-alpha-D-glucosamine biosynthesis; N-acetyl-alpha-D-glucosamine 1-phosphate from alpha-D-glucosamine 6-phosphate (route II): step 2/2.</text>
</comment>
<comment type="pathway">
    <text evidence="1">Nucleotide-sugar biosynthesis; UDP-N-acetyl-alpha-D-glucosamine biosynthesis; UDP-N-acetyl-alpha-D-glucosamine from N-acetyl-alpha-D-glucosamine 1-phosphate: step 1/1.</text>
</comment>
<comment type="pathway">
    <text evidence="1">Bacterial outer membrane biogenesis; LPS lipid A biosynthesis.</text>
</comment>
<comment type="subunit">
    <text evidence="1">Homotrimer.</text>
</comment>
<comment type="subcellular location">
    <subcellularLocation>
        <location evidence="1">Cytoplasm</location>
    </subcellularLocation>
</comment>
<comment type="similarity">
    <text evidence="1">In the N-terminal section; belongs to the N-acetylglucosamine-1-phosphate uridyltransferase family.</text>
</comment>
<comment type="similarity">
    <text evidence="1">In the C-terminal section; belongs to the transferase hexapeptide repeat family.</text>
</comment>
<proteinExistence type="inferred from homology"/>